<reference key="1">
    <citation type="submission" date="2007-05" db="EMBL/GenBank/DDBJ databases">
        <title>Complete sequence of Pseudomonas putida F1.</title>
        <authorList>
            <consortium name="US DOE Joint Genome Institute"/>
            <person name="Copeland A."/>
            <person name="Lucas S."/>
            <person name="Lapidus A."/>
            <person name="Barry K."/>
            <person name="Detter J.C."/>
            <person name="Glavina del Rio T."/>
            <person name="Hammon N."/>
            <person name="Israni S."/>
            <person name="Dalin E."/>
            <person name="Tice H."/>
            <person name="Pitluck S."/>
            <person name="Chain P."/>
            <person name="Malfatti S."/>
            <person name="Shin M."/>
            <person name="Vergez L."/>
            <person name="Schmutz J."/>
            <person name="Larimer F."/>
            <person name="Land M."/>
            <person name="Hauser L."/>
            <person name="Kyrpides N."/>
            <person name="Lykidis A."/>
            <person name="Parales R."/>
            <person name="Richardson P."/>
        </authorList>
    </citation>
    <scope>NUCLEOTIDE SEQUENCE [LARGE SCALE GENOMIC DNA]</scope>
    <source>
        <strain>ATCC 700007 / DSM 6899 / JCM 31910 / BCRC 17059 / LMG 24140 / F1</strain>
    </source>
</reference>
<feature type="chain" id="PRO_1000024364" description="Glutamyl-Q tRNA(Asp) synthetase">
    <location>
        <begin position="1"/>
        <end position="300"/>
    </location>
</feature>
<feature type="short sequence motif" description="'HIGH' region">
    <location>
        <begin position="17"/>
        <end position="27"/>
    </location>
</feature>
<feature type="short sequence motif" description="'KMSKS' region">
    <location>
        <begin position="233"/>
        <end position="237"/>
    </location>
</feature>
<feature type="binding site" evidence="1">
    <location>
        <begin position="14"/>
        <end position="18"/>
    </location>
    <ligand>
        <name>L-glutamate</name>
        <dbReference type="ChEBI" id="CHEBI:29985"/>
    </ligand>
</feature>
<feature type="binding site" evidence="1">
    <location>
        <position position="50"/>
    </location>
    <ligand>
        <name>L-glutamate</name>
        <dbReference type="ChEBI" id="CHEBI:29985"/>
    </ligand>
</feature>
<feature type="binding site" evidence="1">
    <location>
        <position position="106"/>
    </location>
    <ligand>
        <name>Zn(2+)</name>
        <dbReference type="ChEBI" id="CHEBI:29105"/>
    </ligand>
</feature>
<feature type="binding site" evidence="1">
    <location>
        <position position="108"/>
    </location>
    <ligand>
        <name>Zn(2+)</name>
        <dbReference type="ChEBI" id="CHEBI:29105"/>
    </ligand>
</feature>
<feature type="binding site" evidence="1">
    <location>
        <position position="120"/>
    </location>
    <ligand>
        <name>Zn(2+)</name>
        <dbReference type="ChEBI" id="CHEBI:29105"/>
    </ligand>
</feature>
<feature type="binding site" evidence="1">
    <location>
        <position position="124"/>
    </location>
    <ligand>
        <name>Zn(2+)</name>
        <dbReference type="ChEBI" id="CHEBI:29105"/>
    </ligand>
</feature>
<feature type="binding site" evidence="1">
    <location>
        <position position="177"/>
    </location>
    <ligand>
        <name>L-glutamate</name>
        <dbReference type="ChEBI" id="CHEBI:29985"/>
    </ligand>
</feature>
<feature type="binding site" evidence="1">
    <location>
        <position position="195"/>
    </location>
    <ligand>
        <name>L-glutamate</name>
        <dbReference type="ChEBI" id="CHEBI:29985"/>
    </ligand>
</feature>
<feature type="binding site" evidence="1">
    <location>
        <position position="236"/>
    </location>
    <ligand>
        <name>ATP</name>
        <dbReference type="ChEBI" id="CHEBI:30616"/>
    </ligand>
</feature>
<organism>
    <name type="scientific">Pseudomonas putida (strain ATCC 700007 / DSM 6899 / JCM 31910 / BCRC 17059 / LMG 24140 / F1)</name>
    <dbReference type="NCBI Taxonomy" id="351746"/>
    <lineage>
        <taxon>Bacteria</taxon>
        <taxon>Pseudomonadati</taxon>
        <taxon>Pseudomonadota</taxon>
        <taxon>Gammaproteobacteria</taxon>
        <taxon>Pseudomonadales</taxon>
        <taxon>Pseudomonadaceae</taxon>
        <taxon>Pseudomonas</taxon>
    </lineage>
</organism>
<evidence type="ECO:0000255" key="1">
    <source>
        <dbReference type="HAMAP-Rule" id="MF_01428"/>
    </source>
</evidence>
<name>GLUQ_PSEP1</name>
<accession>A5W968</accession>
<protein>
    <recommendedName>
        <fullName evidence="1">Glutamyl-Q tRNA(Asp) synthetase</fullName>
        <shortName evidence="1">Glu-Q-RSs</shortName>
        <ecNumber evidence="1">6.1.1.-</ecNumber>
    </recommendedName>
</protein>
<gene>
    <name evidence="1" type="primary">gluQ</name>
    <name type="ordered locus">Pput_4558</name>
</gene>
<proteinExistence type="inferred from homology"/>
<sequence>MPSLTMTDSSYIGRFAPTPSGFLHFGSLVAALASWLDARAVNGRWLLRMEDTDPPREMPGARDAILQTLERYGLHWDGEVVFQSQRHDAYAAVVDRLFNMGLAYACTCSRKQLERYNGIYPGFCRNAGHAREGAAIRLRVPELIYRFTDRVQGEYQQHLGREVGDFVIQRRDGLYAYQLAVVLDDAWQGVTDIVRGADLLDNTPRQLYLQELLGFSQPRYLHIPLIVQPDGHKLGKSYRSPPLQAEHATPLLLRALRALGQETDPELLLATPAEVLAVARTQWRPEAIAQRTTVPEADLR</sequence>
<dbReference type="EC" id="6.1.1.-" evidence="1"/>
<dbReference type="EMBL" id="CP000712">
    <property type="protein sequence ID" value="ABQ80678.1"/>
    <property type="molecule type" value="Genomic_DNA"/>
</dbReference>
<dbReference type="SMR" id="A5W968"/>
<dbReference type="KEGG" id="ppf:Pput_4558"/>
<dbReference type="eggNOG" id="COG0008">
    <property type="taxonomic scope" value="Bacteria"/>
</dbReference>
<dbReference type="HOGENOM" id="CLU_015768_0_1_6"/>
<dbReference type="GO" id="GO:0005829">
    <property type="term" value="C:cytosol"/>
    <property type="evidence" value="ECO:0007669"/>
    <property type="project" value="TreeGrafter"/>
</dbReference>
<dbReference type="GO" id="GO:0005524">
    <property type="term" value="F:ATP binding"/>
    <property type="evidence" value="ECO:0007669"/>
    <property type="project" value="UniProtKB-KW"/>
</dbReference>
<dbReference type="GO" id="GO:0004818">
    <property type="term" value="F:glutamate-tRNA ligase activity"/>
    <property type="evidence" value="ECO:0007669"/>
    <property type="project" value="TreeGrafter"/>
</dbReference>
<dbReference type="GO" id="GO:0008270">
    <property type="term" value="F:zinc ion binding"/>
    <property type="evidence" value="ECO:0007669"/>
    <property type="project" value="UniProtKB-UniRule"/>
</dbReference>
<dbReference type="GO" id="GO:0006424">
    <property type="term" value="P:glutamyl-tRNA aminoacylation"/>
    <property type="evidence" value="ECO:0007669"/>
    <property type="project" value="InterPro"/>
</dbReference>
<dbReference type="GO" id="GO:0006400">
    <property type="term" value="P:tRNA modification"/>
    <property type="evidence" value="ECO:0007669"/>
    <property type="project" value="InterPro"/>
</dbReference>
<dbReference type="FunFam" id="3.40.50.620:FF:000093">
    <property type="entry name" value="Glutamyl-Q tRNA(Asp) synthetase"/>
    <property type="match status" value="1"/>
</dbReference>
<dbReference type="Gene3D" id="3.90.800.10">
    <property type="entry name" value="Glutamyl-tRNA Synthetase, Domain 3"/>
    <property type="match status" value="1"/>
</dbReference>
<dbReference type="Gene3D" id="3.40.50.620">
    <property type="entry name" value="HUPs"/>
    <property type="match status" value="1"/>
</dbReference>
<dbReference type="HAMAP" id="MF_01428">
    <property type="entry name" value="Glu_Q_tRNA_synth"/>
    <property type="match status" value="1"/>
</dbReference>
<dbReference type="InterPro" id="IPR022380">
    <property type="entry name" value="Glu-Q_tRNA(Asp)_Synthase"/>
</dbReference>
<dbReference type="InterPro" id="IPR000924">
    <property type="entry name" value="Glu/Gln-tRNA-synth"/>
</dbReference>
<dbReference type="InterPro" id="IPR020058">
    <property type="entry name" value="Glu/Gln-tRNA-synth_Ib_cat-dom"/>
</dbReference>
<dbReference type="InterPro" id="IPR049940">
    <property type="entry name" value="GluQ/Sye"/>
</dbReference>
<dbReference type="InterPro" id="IPR014729">
    <property type="entry name" value="Rossmann-like_a/b/a_fold"/>
</dbReference>
<dbReference type="NCBIfam" id="NF004314">
    <property type="entry name" value="PRK05710.1-3"/>
    <property type="match status" value="1"/>
</dbReference>
<dbReference type="NCBIfam" id="TIGR03838">
    <property type="entry name" value="queuosine_YadB"/>
    <property type="match status" value="1"/>
</dbReference>
<dbReference type="PANTHER" id="PTHR43311">
    <property type="entry name" value="GLUTAMATE--TRNA LIGASE"/>
    <property type="match status" value="1"/>
</dbReference>
<dbReference type="PANTHER" id="PTHR43311:SF1">
    <property type="entry name" value="GLUTAMYL-Q TRNA(ASP) SYNTHETASE"/>
    <property type="match status" value="1"/>
</dbReference>
<dbReference type="Pfam" id="PF00749">
    <property type="entry name" value="tRNA-synt_1c"/>
    <property type="match status" value="1"/>
</dbReference>
<dbReference type="PRINTS" id="PR00987">
    <property type="entry name" value="TRNASYNTHGLU"/>
</dbReference>
<dbReference type="SUPFAM" id="SSF52374">
    <property type="entry name" value="Nucleotidylyl transferase"/>
    <property type="match status" value="1"/>
</dbReference>
<comment type="function">
    <text evidence="1">Catalyzes the tRNA-independent activation of glutamate in presence of ATP and the subsequent transfer of glutamate onto a tRNA(Asp). Glutamate is transferred on the 2-amino-5-(4,5-dihydroxy-2-cyclopenten-1-yl) moiety of the queuosine in the wobble position of the QUC anticodon.</text>
</comment>
<comment type="cofactor">
    <cofactor evidence="1">
        <name>Zn(2+)</name>
        <dbReference type="ChEBI" id="CHEBI:29105"/>
    </cofactor>
    <text evidence="1">Binds 1 zinc ion per subunit.</text>
</comment>
<comment type="similarity">
    <text evidence="1">Belongs to the class-I aminoacyl-tRNA synthetase family. GluQ subfamily.</text>
</comment>
<keyword id="KW-0030">Aminoacyl-tRNA synthetase</keyword>
<keyword id="KW-0067">ATP-binding</keyword>
<keyword id="KW-0436">Ligase</keyword>
<keyword id="KW-0479">Metal-binding</keyword>
<keyword id="KW-0547">Nucleotide-binding</keyword>
<keyword id="KW-0862">Zinc</keyword>